<evidence type="ECO:0000255" key="1">
    <source>
        <dbReference type="HAMAP-Rule" id="MF_01621"/>
    </source>
</evidence>
<reference key="1">
    <citation type="submission" date="2007-10" db="EMBL/GenBank/DDBJ databases">
        <title>Complete sequence of Shewanella pealeana ATCC 700345.</title>
        <authorList>
            <consortium name="US DOE Joint Genome Institute"/>
            <person name="Copeland A."/>
            <person name="Lucas S."/>
            <person name="Lapidus A."/>
            <person name="Barry K."/>
            <person name="Glavina del Rio T."/>
            <person name="Dalin E."/>
            <person name="Tice H."/>
            <person name="Pitluck S."/>
            <person name="Chertkov O."/>
            <person name="Brettin T."/>
            <person name="Bruce D."/>
            <person name="Detter J.C."/>
            <person name="Han C."/>
            <person name="Schmutz J."/>
            <person name="Larimer F."/>
            <person name="Land M."/>
            <person name="Hauser L."/>
            <person name="Kyrpides N."/>
            <person name="Kim E."/>
            <person name="Zhao J.-S.Z."/>
            <person name="Manno D."/>
            <person name="Hawari J."/>
            <person name="Richardson P."/>
        </authorList>
    </citation>
    <scope>NUCLEOTIDE SEQUENCE [LARGE SCALE GENOMIC DNA]</scope>
    <source>
        <strain>ATCC 700345 / ANG-SQ1</strain>
    </source>
</reference>
<proteinExistence type="inferred from homology"/>
<accession>A8GYG0</accession>
<dbReference type="EC" id="4.2.1.17" evidence="1"/>
<dbReference type="EC" id="5.1.2.3" evidence="1"/>
<dbReference type="EC" id="5.3.3.8" evidence="1"/>
<dbReference type="EC" id="1.1.1.35" evidence="1"/>
<dbReference type="EMBL" id="CP000851">
    <property type="protein sequence ID" value="ABV85347.1"/>
    <property type="molecule type" value="Genomic_DNA"/>
</dbReference>
<dbReference type="RefSeq" id="WP_012153295.1">
    <property type="nucleotide sequence ID" value="NC_009901.1"/>
</dbReference>
<dbReference type="SMR" id="A8GYG0"/>
<dbReference type="STRING" id="398579.Spea_0018"/>
<dbReference type="KEGG" id="spl:Spea_0018"/>
<dbReference type="eggNOG" id="COG1024">
    <property type="taxonomic scope" value="Bacteria"/>
</dbReference>
<dbReference type="eggNOG" id="COG1250">
    <property type="taxonomic scope" value="Bacteria"/>
</dbReference>
<dbReference type="HOGENOM" id="CLU_009834_16_3_6"/>
<dbReference type="OrthoDB" id="5389341at2"/>
<dbReference type="UniPathway" id="UPA00659"/>
<dbReference type="Proteomes" id="UP000002608">
    <property type="component" value="Chromosome"/>
</dbReference>
<dbReference type="GO" id="GO:0036125">
    <property type="term" value="C:fatty acid beta-oxidation multienzyme complex"/>
    <property type="evidence" value="ECO:0007669"/>
    <property type="project" value="InterPro"/>
</dbReference>
<dbReference type="GO" id="GO:0008692">
    <property type="term" value="F:3-hydroxybutyryl-CoA epimerase activity"/>
    <property type="evidence" value="ECO:0007669"/>
    <property type="project" value="UniProtKB-UniRule"/>
</dbReference>
<dbReference type="GO" id="GO:0004165">
    <property type="term" value="F:delta(3)-delta(2)-enoyl-CoA isomerase activity"/>
    <property type="evidence" value="ECO:0007669"/>
    <property type="project" value="UniProtKB-UniRule"/>
</dbReference>
<dbReference type="GO" id="GO:0004300">
    <property type="term" value="F:enoyl-CoA hydratase activity"/>
    <property type="evidence" value="ECO:0007669"/>
    <property type="project" value="UniProtKB-UniRule"/>
</dbReference>
<dbReference type="GO" id="GO:0016509">
    <property type="term" value="F:long-chain-3-hydroxyacyl-CoA dehydrogenase activity"/>
    <property type="evidence" value="ECO:0007669"/>
    <property type="project" value="TreeGrafter"/>
</dbReference>
<dbReference type="GO" id="GO:0070403">
    <property type="term" value="F:NAD+ binding"/>
    <property type="evidence" value="ECO:0007669"/>
    <property type="project" value="InterPro"/>
</dbReference>
<dbReference type="GO" id="GO:0006635">
    <property type="term" value="P:fatty acid beta-oxidation"/>
    <property type="evidence" value="ECO:0007669"/>
    <property type="project" value="UniProtKB-UniRule"/>
</dbReference>
<dbReference type="CDD" id="cd06558">
    <property type="entry name" value="crotonase-like"/>
    <property type="match status" value="1"/>
</dbReference>
<dbReference type="FunFam" id="1.10.1040.50:FF:000001">
    <property type="entry name" value="Fatty acid oxidation complex subunit alpha"/>
    <property type="match status" value="1"/>
</dbReference>
<dbReference type="FunFam" id="3.40.50.720:FF:000009">
    <property type="entry name" value="Fatty oxidation complex, alpha subunit"/>
    <property type="match status" value="1"/>
</dbReference>
<dbReference type="Gene3D" id="1.10.1040.50">
    <property type="match status" value="1"/>
</dbReference>
<dbReference type="Gene3D" id="3.90.226.10">
    <property type="entry name" value="2-enoyl-CoA Hydratase, Chain A, domain 1"/>
    <property type="match status" value="1"/>
</dbReference>
<dbReference type="Gene3D" id="3.40.50.720">
    <property type="entry name" value="NAD(P)-binding Rossmann-like Domain"/>
    <property type="match status" value="1"/>
</dbReference>
<dbReference type="HAMAP" id="MF_01621">
    <property type="entry name" value="FadB"/>
    <property type="match status" value="1"/>
</dbReference>
<dbReference type="InterPro" id="IPR006180">
    <property type="entry name" value="3-OHacyl-CoA_DH_CS"/>
</dbReference>
<dbReference type="InterPro" id="IPR006176">
    <property type="entry name" value="3-OHacyl-CoA_DH_NAD-bd"/>
</dbReference>
<dbReference type="InterPro" id="IPR006108">
    <property type="entry name" value="3HC_DH_C"/>
</dbReference>
<dbReference type="InterPro" id="IPR008927">
    <property type="entry name" value="6-PGluconate_DH-like_C_sf"/>
</dbReference>
<dbReference type="InterPro" id="IPR029045">
    <property type="entry name" value="ClpP/crotonase-like_dom_sf"/>
</dbReference>
<dbReference type="InterPro" id="IPR018376">
    <property type="entry name" value="Enoyl-CoA_hyd/isom_CS"/>
</dbReference>
<dbReference type="InterPro" id="IPR001753">
    <property type="entry name" value="Enoyl-CoA_hydra/iso"/>
</dbReference>
<dbReference type="InterPro" id="IPR050136">
    <property type="entry name" value="FA_oxidation_alpha_subunit"/>
</dbReference>
<dbReference type="InterPro" id="IPR012799">
    <property type="entry name" value="FadB"/>
</dbReference>
<dbReference type="InterPro" id="IPR036291">
    <property type="entry name" value="NAD(P)-bd_dom_sf"/>
</dbReference>
<dbReference type="NCBIfam" id="TIGR02437">
    <property type="entry name" value="FadB"/>
    <property type="match status" value="1"/>
</dbReference>
<dbReference type="NCBIfam" id="NF008727">
    <property type="entry name" value="PRK11730.1"/>
    <property type="match status" value="1"/>
</dbReference>
<dbReference type="PANTHER" id="PTHR43612">
    <property type="entry name" value="TRIFUNCTIONAL ENZYME SUBUNIT ALPHA"/>
    <property type="match status" value="1"/>
</dbReference>
<dbReference type="PANTHER" id="PTHR43612:SF3">
    <property type="entry name" value="TRIFUNCTIONAL ENZYME SUBUNIT ALPHA, MITOCHONDRIAL"/>
    <property type="match status" value="1"/>
</dbReference>
<dbReference type="Pfam" id="PF00725">
    <property type="entry name" value="3HCDH"/>
    <property type="match status" value="1"/>
</dbReference>
<dbReference type="Pfam" id="PF02737">
    <property type="entry name" value="3HCDH_N"/>
    <property type="match status" value="1"/>
</dbReference>
<dbReference type="Pfam" id="PF00378">
    <property type="entry name" value="ECH_1"/>
    <property type="match status" value="1"/>
</dbReference>
<dbReference type="SUPFAM" id="SSF48179">
    <property type="entry name" value="6-phosphogluconate dehydrogenase C-terminal domain-like"/>
    <property type="match status" value="2"/>
</dbReference>
<dbReference type="SUPFAM" id="SSF52096">
    <property type="entry name" value="ClpP/crotonase"/>
    <property type="match status" value="1"/>
</dbReference>
<dbReference type="SUPFAM" id="SSF51735">
    <property type="entry name" value="NAD(P)-binding Rossmann-fold domains"/>
    <property type="match status" value="1"/>
</dbReference>
<dbReference type="PROSITE" id="PS00067">
    <property type="entry name" value="3HCDH"/>
    <property type="match status" value="1"/>
</dbReference>
<dbReference type="PROSITE" id="PS00166">
    <property type="entry name" value="ENOYL_COA_HYDRATASE"/>
    <property type="match status" value="1"/>
</dbReference>
<comment type="function">
    <text evidence="1">Involved in the aerobic and anaerobic degradation of long-chain fatty acids via beta-oxidation cycle. Catalyzes the formation of 3-oxoacyl-CoA from enoyl-CoA via L-3-hydroxyacyl-CoA. It can also use D-3-hydroxyacyl-CoA and cis-3-enoyl-CoA as substrate.</text>
</comment>
<comment type="catalytic activity">
    <reaction evidence="1">
        <text>a (3S)-3-hydroxyacyl-CoA + NAD(+) = a 3-oxoacyl-CoA + NADH + H(+)</text>
        <dbReference type="Rhea" id="RHEA:22432"/>
        <dbReference type="ChEBI" id="CHEBI:15378"/>
        <dbReference type="ChEBI" id="CHEBI:57318"/>
        <dbReference type="ChEBI" id="CHEBI:57540"/>
        <dbReference type="ChEBI" id="CHEBI:57945"/>
        <dbReference type="ChEBI" id="CHEBI:90726"/>
        <dbReference type="EC" id="1.1.1.35"/>
    </reaction>
</comment>
<comment type="catalytic activity">
    <reaction evidence="1">
        <text>a (3S)-3-hydroxyacyl-CoA = a (2E)-enoyl-CoA + H2O</text>
        <dbReference type="Rhea" id="RHEA:16105"/>
        <dbReference type="ChEBI" id="CHEBI:15377"/>
        <dbReference type="ChEBI" id="CHEBI:57318"/>
        <dbReference type="ChEBI" id="CHEBI:58856"/>
        <dbReference type="EC" id="4.2.1.17"/>
    </reaction>
</comment>
<comment type="catalytic activity">
    <reaction evidence="1">
        <text>a 4-saturated-(3S)-3-hydroxyacyl-CoA = a (3E)-enoyl-CoA + H2O</text>
        <dbReference type="Rhea" id="RHEA:20724"/>
        <dbReference type="ChEBI" id="CHEBI:15377"/>
        <dbReference type="ChEBI" id="CHEBI:58521"/>
        <dbReference type="ChEBI" id="CHEBI:137480"/>
        <dbReference type="EC" id="4.2.1.17"/>
    </reaction>
</comment>
<comment type="catalytic activity">
    <reaction evidence="1">
        <text>(3S)-3-hydroxybutanoyl-CoA = (3R)-3-hydroxybutanoyl-CoA</text>
        <dbReference type="Rhea" id="RHEA:21760"/>
        <dbReference type="ChEBI" id="CHEBI:57315"/>
        <dbReference type="ChEBI" id="CHEBI:57316"/>
        <dbReference type="EC" id="5.1.2.3"/>
    </reaction>
</comment>
<comment type="catalytic activity">
    <reaction evidence="1">
        <text>a (3Z)-enoyl-CoA = a 4-saturated (2E)-enoyl-CoA</text>
        <dbReference type="Rhea" id="RHEA:45900"/>
        <dbReference type="ChEBI" id="CHEBI:85097"/>
        <dbReference type="ChEBI" id="CHEBI:85489"/>
        <dbReference type="EC" id="5.3.3.8"/>
    </reaction>
</comment>
<comment type="catalytic activity">
    <reaction evidence="1">
        <text>a (3E)-enoyl-CoA = a 4-saturated (2E)-enoyl-CoA</text>
        <dbReference type="Rhea" id="RHEA:45228"/>
        <dbReference type="ChEBI" id="CHEBI:58521"/>
        <dbReference type="ChEBI" id="CHEBI:85097"/>
        <dbReference type="EC" id="5.3.3.8"/>
    </reaction>
</comment>
<comment type="pathway">
    <text evidence="1">Lipid metabolism; fatty acid beta-oxidation.</text>
</comment>
<comment type="subunit">
    <text evidence="1">Heterotetramer of two alpha chains (FadB) and two beta chains (FadA).</text>
</comment>
<comment type="similarity">
    <text evidence="1">In the N-terminal section; belongs to the enoyl-CoA hydratase/isomerase family.</text>
</comment>
<comment type="similarity">
    <text evidence="1">In the C-terminal section; belongs to the 3-hydroxyacyl-CoA dehydrogenase family.</text>
</comment>
<feature type="chain" id="PRO_1000088084" description="Fatty acid oxidation complex subunit alpha">
    <location>
        <begin position="1"/>
        <end position="717"/>
    </location>
</feature>
<feature type="region of interest" description="Enoyl-CoA hydratase/isomerase" evidence="1">
    <location>
        <begin position="1"/>
        <end position="189"/>
    </location>
</feature>
<feature type="region of interest" description="3-hydroxyacyl-CoA dehydrogenase" evidence="1">
    <location>
        <begin position="311"/>
        <end position="717"/>
    </location>
</feature>
<feature type="active site" description="For 3-hydroxyacyl-CoA dehydrogenase activity" evidence="1">
    <location>
        <position position="450"/>
    </location>
</feature>
<feature type="binding site" evidence="1">
    <location>
        <position position="296"/>
    </location>
    <ligand>
        <name>substrate</name>
    </ligand>
</feature>
<feature type="binding site" evidence="1">
    <location>
        <position position="324"/>
    </location>
    <ligand>
        <name>NAD(+)</name>
        <dbReference type="ChEBI" id="CHEBI:57540"/>
    </ligand>
</feature>
<feature type="binding site" evidence="1">
    <location>
        <position position="343"/>
    </location>
    <ligand>
        <name>NAD(+)</name>
        <dbReference type="ChEBI" id="CHEBI:57540"/>
    </ligand>
</feature>
<feature type="binding site" evidence="1">
    <location>
        <begin position="400"/>
        <end position="402"/>
    </location>
    <ligand>
        <name>NAD(+)</name>
        <dbReference type="ChEBI" id="CHEBI:57540"/>
    </ligand>
</feature>
<feature type="binding site" evidence="1">
    <location>
        <position position="407"/>
    </location>
    <ligand>
        <name>NAD(+)</name>
        <dbReference type="ChEBI" id="CHEBI:57540"/>
    </ligand>
</feature>
<feature type="binding site" evidence="1">
    <location>
        <position position="429"/>
    </location>
    <ligand>
        <name>NAD(+)</name>
        <dbReference type="ChEBI" id="CHEBI:57540"/>
    </ligand>
</feature>
<feature type="binding site" evidence="1">
    <location>
        <position position="453"/>
    </location>
    <ligand>
        <name>NAD(+)</name>
        <dbReference type="ChEBI" id="CHEBI:57540"/>
    </ligand>
</feature>
<feature type="binding site" evidence="1">
    <location>
        <position position="500"/>
    </location>
    <ligand>
        <name>substrate</name>
    </ligand>
</feature>
<feature type="binding site" evidence="1">
    <location>
        <position position="660"/>
    </location>
    <ligand>
        <name>substrate</name>
    </ligand>
</feature>
<feature type="site" description="Important for catalytic activity" evidence="1">
    <location>
        <position position="119"/>
    </location>
</feature>
<feature type="site" description="Important for catalytic activity" evidence="1">
    <location>
        <position position="139"/>
    </location>
</feature>
<keyword id="KW-0276">Fatty acid metabolism</keyword>
<keyword id="KW-0413">Isomerase</keyword>
<keyword id="KW-0442">Lipid degradation</keyword>
<keyword id="KW-0443">Lipid metabolism</keyword>
<keyword id="KW-0456">Lyase</keyword>
<keyword id="KW-0511">Multifunctional enzyme</keyword>
<keyword id="KW-0520">NAD</keyword>
<keyword id="KW-0560">Oxidoreductase</keyword>
<keyword id="KW-1185">Reference proteome</keyword>
<protein>
    <recommendedName>
        <fullName evidence="1">Fatty acid oxidation complex subunit alpha</fullName>
    </recommendedName>
    <domain>
        <recommendedName>
            <fullName evidence="1">Enoyl-CoA hydratase/Delta(3)-cis-Delta(2)-trans-enoyl-CoA isomerase/3-hydroxybutyryl-CoA epimerase</fullName>
            <ecNumber evidence="1">4.2.1.17</ecNumber>
            <ecNumber evidence="1">5.1.2.3</ecNumber>
            <ecNumber evidence="1">5.3.3.8</ecNumber>
        </recommendedName>
    </domain>
    <domain>
        <recommendedName>
            <fullName evidence="1">3-hydroxyacyl-CoA dehydrogenase</fullName>
            <ecNumber evidence="1">1.1.1.35</ecNumber>
        </recommendedName>
    </domain>
</protein>
<name>FADB_SHEPA</name>
<organism>
    <name type="scientific">Shewanella pealeana (strain ATCC 700345 / ANG-SQ1)</name>
    <dbReference type="NCBI Taxonomy" id="398579"/>
    <lineage>
        <taxon>Bacteria</taxon>
        <taxon>Pseudomonadati</taxon>
        <taxon>Pseudomonadota</taxon>
        <taxon>Gammaproteobacteria</taxon>
        <taxon>Alteromonadales</taxon>
        <taxon>Shewanellaceae</taxon>
        <taxon>Shewanella</taxon>
    </lineage>
</organism>
<sequence>MIYQSPTIEVELLEDNIAHLCFKAQGSVNKFDRETIDSLNAALDSIKQDSSIKALMLSSAKDAFVVGADITEFLGLFAEEDTVLQSWLEQANVVFNKLEDLPFPTISAINGFALGAGCETILATDFRIADTTARIGLPETKLGIIPGFGGTVRLPRVIGADNALEWITSGKDQRPEAALKVGAIDAVVAPEQLKPAALKMLKDALIEKLDWQTRRAKKQAPLTLPKLEAMMSFATAKGMVFKVAGKHYPAPMAVISVIEQAAQLDRAGALQVEHQAFIKLAKTEVAQALIGIFLNDQLVKGKAKKAGKLAKKVNSAAVLGAGIMGGGIAYQSASKGTPIVMKDIAQPALDLGLGEAAKLLTAQVKRGRSTPAKMAAVLNNITPALDYAPVKDADVVVEAVVEHPKVKSMVLAEVEQHVSEDAIITSNTSTISINLLAKSLKKPERFCGMHFFNPVHKMPLVEVIRGENSSDETVASVVAYASKMGKTPIVVNDCPGFFVNRVLFPYFAGFSGLLADGADFAAIDKVMEKQFGWPMGPAYLLDVVGLDTGHHAQAVMAEGFPDRMGKTGKDAIDVMFEAERFGQKNSKGFYQYSVDRRGKPKKDLDPTSYELLQAEFGEQKAFESDEIIARTMIPMIIETVRCLEEGIIASPAEADMGLVYGLGFPPFRGGVFRYLDTMGVANFVALADKYAHLGGLYQVTDTMRELAANNGSYYQQA</sequence>
<gene>
    <name evidence="1" type="primary">fadB</name>
    <name type="ordered locus">Spea_0018</name>
</gene>